<name>RK34_CYACA</name>
<feature type="chain" id="PRO_0000187514" description="Large ribosomal subunit protein bL34c">
    <location>
        <begin position="1"/>
        <end position="45"/>
    </location>
</feature>
<feature type="region of interest" description="Disordered" evidence="1">
    <location>
        <begin position="1"/>
        <end position="21"/>
    </location>
</feature>
<feature type="compositionally biased region" description="Basic residues" evidence="1">
    <location>
        <begin position="10"/>
        <end position="19"/>
    </location>
</feature>
<keyword id="KW-0150">Chloroplast</keyword>
<keyword id="KW-0934">Plastid</keyword>
<keyword id="KW-0687">Ribonucleoprotein</keyword>
<keyword id="KW-0689">Ribosomal protein</keyword>
<organism>
    <name type="scientific">Cyanidium caldarium</name>
    <name type="common">Red alga</name>
    <dbReference type="NCBI Taxonomy" id="2771"/>
    <lineage>
        <taxon>Eukaryota</taxon>
        <taxon>Rhodophyta</taxon>
        <taxon>Bangiophyceae</taxon>
        <taxon>Cyanidiales</taxon>
        <taxon>Cyanidiaceae</taxon>
        <taxon>Cyanidium</taxon>
    </lineage>
</organism>
<reference key="1">
    <citation type="journal article" date="2000" name="J. Mol. Evol.">
        <title>The structure and gene repertoire of an ancient red algal plastid genome.</title>
        <authorList>
            <person name="Gloeckner G."/>
            <person name="Rosenthal A."/>
            <person name="Valentin K.-U."/>
        </authorList>
    </citation>
    <scope>NUCLEOTIDE SEQUENCE [LARGE SCALE GENOMIC DNA]</scope>
    <source>
        <strain>RK-1</strain>
    </source>
</reference>
<proteinExistence type="inferred from homology"/>
<evidence type="ECO:0000256" key="1">
    <source>
        <dbReference type="SAM" id="MobiDB-lite"/>
    </source>
</evidence>
<evidence type="ECO:0000305" key="2"/>
<geneLocation type="chloroplast"/>
<accession>O19912</accession>
<protein>
    <recommendedName>
        <fullName evidence="2">Large ribosomal subunit protein bL34c</fullName>
    </recommendedName>
    <alternativeName>
        <fullName>50S ribosomal protein L34, chloroplastic</fullName>
    </alternativeName>
</protein>
<gene>
    <name type="primary">rpl34</name>
</gene>
<sequence>MIQRTLTGTNRKKTKRSGFRSRMLQTEEEKLLILDVMKKRYYLVK</sequence>
<comment type="subcellular location">
    <subcellularLocation>
        <location>Plastid</location>
        <location>Chloroplast</location>
    </subcellularLocation>
</comment>
<comment type="similarity">
    <text evidence="2">Belongs to the bacterial ribosomal protein bL34 family.</text>
</comment>
<dbReference type="EMBL" id="AF022186">
    <property type="protein sequence ID" value="AAB82677.1"/>
    <property type="molecule type" value="Genomic_DNA"/>
</dbReference>
<dbReference type="PIR" id="T11980">
    <property type="entry name" value="T11980"/>
</dbReference>
<dbReference type="RefSeq" id="NP_045084.1">
    <property type="nucleotide sequence ID" value="NC_001840.1"/>
</dbReference>
<dbReference type="SMR" id="O19912"/>
<dbReference type="GeneID" id="800245"/>
<dbReference type="GO" id="GO:0009507">
    <property type="term" value="C:chloroplast"/>
    <property type="evidence" value="ECO:0007669"/>
    <property type="project" value="UniProtKB-SubCell"/>
</dbReference>
<dbReference type="GO" id="GO:1990904">
    <property type="term" value="C:ribonucleoprotein complex"/>
    <property type="evidence" value="ECO:0007669"/>
    <property type="project" value="UniProtKB-KW"/>
</dbReference>
<dbReference type="GO" id="GO:0005840">
    <property type="term" value="C:ribosome"/>
    <property type="evidence" value="ECO:0007669"/>
    <property type="project" value="UniProtKB-KW"/>
</dbReference>
<dbReference type="GO" id="GO:0003735">
    <property type="term" value="F:structural constituent of ribosome"/>
    <property type="evidence" value="ECO:0007669"/>
    <property type="project" value="InterPro"/>
</dbReference>
<dbReference type="GO" id="GO:0006412">
    <property type="term" value="P:translation"/>
    <property type="evidence" value="ECO:0007669"/>
    <property type="project" value="UniProtKB-UniRule"/>
</dbReference>
<dbReference type="HAMAP" id="MF_00391">
    <property type="entry name" value="Ribosomal_bL34"/>
    <property type="match status" value="1"/>
</dbReference>
<dbReference type="InterPro" id="IPR000271">
    <property type="entry name" value="Ribosomal_bL34"/>
</dbReference>
<dbReference type="Pfam" id="PF00468">
    <property type="entry name" value="Ribosomal_L34"/>
    <property type="match status" value="1"/>
</dbReference>